<accession>B0XS28</accession>
<name>EIF3G_ASPFC</name>
<organism>
    <name type="scientific">Aspergillus fumigatus (strain CBS 144.89 / FGSC A1163 / CEA10)</name>
    <name type="common">Neosartorya fumigata</name>
    <dbReference type="NCBI Taxonomy" id="451804"/>
    <lineage>
        <taxon>Eukaryota</taxon>
        <taxon>Fungi</taxon>
        <taxon>Dikarya</taxon>
        <taxon>Ascomycota</taxon>
        <taxon>Pezizomycotina</taxon>
        <taxon>Eurotiomycetes</taxon>
        <taxon>Eurotiomycetidae</taxon>
        <taxon>Eurotiales</taxon>
        <taxon>Aspergillaceae</taxon>
        <taxon>Aspergillus</taxon>
        <taxon>Aspergillus subgen. Fumigati</taxon>
    </lineage>
</organism>
<reference key="1">
    <citation type="journal article" date="2008" name="PLoS Genet.">
        <title>Genomic islands in the pathogenic filamentous fungus Aspergillus fumigatus.</title>
        <authorList>
            <person name="Fedorova N.D."/>
            <person name="Khaldi N."/>
            <person name="Joardar V.S."/>
            <person name="Maiti R."/>
            <person name="Amedeo P."/>
            <person name="Anderson M.J."/>
            <person name="Crabtree J."/>
            <person name="Silva J.C."/>
            <person name="Badger J.H."/>
            <person name="Albarraq A."/>
            <person name="Angiuoli S."/>
            <person name="Bussey H."/>
            <person name="Bowyer P."/>
            <person name="Cotty P.J."/>
            <person name="Dyer P.S."/>
            <person name="Egan A."/>
            <person name="Galens K."/>
            <person name="Fraser-Liggett C.M."/>
            <person name="Haas B.J."/>
            <person name="Inman J.M."/>
            <person name="Kent R."/>
            <person name="Lemieux S."/>
            <person name="Malavazi I."/>
            <person name="Orvis J."/>
            <person name="Roemer T."/>
            <person name="Ronning C.M."/>
            <person name="Sundaram J.P."/>
            <person name="Sutton G."/>
            <person name="Turner G."/>
            <person name="Venter J.C."/>
            <person name="White O.R."/>
            <person name="Whitty B.R."/>
            <person name="Youngman P."/>
            <person name="Wolfe K.H."/>
            <person name="Goldman G.H."/>
            <person name="Wortman J.R."/>
            <person name="Jiang B."/>
            <person name="Denning D.W."/>
            <person name="Nierman W.C."/>
        </authorList>
    </citation>
    <scope>NUCLEOTIDE SEQUENCE [LARGE SCALE GENOMIC DNA]</scope>
    <source>
        <strain>CBS 144.89 / FGSC A1163 / CEA10</strain>
    </source>
</reference>
<protein>
    <recommendedName>
        <fullName evidence="1">Eukaryotic translation initiation factor 3 subunit G</fullName>
        <shortName evidence="1">eIF3g</shortName>
    </recommendedName>
    <alternativeName>
        <fullName evidence="1">Eukaryotic translation initiation factor 3 RNA-binding subunit</fullName>
        <shortName evidence="1">eIF-3 RNA-binding subunit</shortName>
    </alternativeName>
    <alternativeName>
        <fullName evidence="1">Translation initiation factor eIF3 p33 subunit homolog</fullName>
        <shortName evidence="1">eIF3 p33 homolog</shortName>
    </alternativeName>
</protein>
<comment type="function">
    <text evidence="1">RNA-binding component of the eukaryotic translation initiation factor 3 (eIF-3) complex, which is involved in protein synthesis of a specialized repertoire of mRNAs and, together with other initiation factors, stimulates binding of mRNA and methionyl-tRNAi to the 40S ribosome. The eIF-3 complex specifically targets and initiates translation of a subset of mRNAs involved in cell proliferation. This subunit can bind 18S rRNA.</text>
</comment>
<comment type="subunit">
    <text evidence="1">Component of the eukaryotic translation initiation factor 3 (eIF-3) complex.</text>
</comment>
<comment type="subcellular location">
    <subcellularLocation>
        <location evidence="1">Cytoplasm</location>
    </subcellularLocation>
</comment>
<comment type="similarity">
    <text evidence="1">Belongs to the eIF-3 subunit G family.</text>
</comment>
<keyword id="KW-0963">Cytoplasm</keyword>
<keyword id="KW-0396">Initiation factor</keyword>
<keyword id="KW-0648">Protein biosynthesis</keyword>
<keyword id="KW-0694">RNA-binding</keyword>
<proteinExistence type="inferred from homology"/>
<gene>
    <name type="primary">tif35</name>
    <name type="ORF">AFUB_025710</name>
</gene>
<dbReference type="EMBL" id="DS499595">
    <property type="protein sequence ID" value="EDP54514.1"/>
    <property type="molecule type" value="Genomic_DNA"/>
</dbReference>
<dbReference type="SMR" id="B0XS28"/>
<dbReference type="EnsemblFungi" id="EDP54514">
    <property type="protein sequence ID" value="EDP54514"/>
    <property type="gene ID" value="AFUB_025710"/>
</dbReference>
<dbReference type="VEuPathDB" id="FungiDB:AFUB_025710"/>
<dbReference type="HOGENOM" id="CLU_034595_0_0_1"/>
<dbReference type="OrthoDB" id="104628at5052"/>
<dbReference type="PhylomeDB" id="B0XS28"/>
<dbReference type="Proteomes" id="UP000001699">
    <property type="component" value="Unassembled WGS sequence"/>
</dbReference>
<dbReference type="GO" id="GO:0016282">
    <property type="term" value="C:eukaryotic 43S preinitiation complex"/>
    <property type="evidence" value="ECO:0007669"/>
    <property type="project" value="UniProtKB-UniRule"/>
</dbReference>
<dbReference type="GO" id="GO:0033290">
    <property type="term" value="C:eukaryotic 48S preinitiation complex"/>
    <property type="evidence" value="ECO:0007669"/>
    <property type="project" value="UniProtKB-UniRule"/>
</dbReference>
<dbReference type="GO" id="GO:0071540">
    <property type="term" value="C:eukaryotic translation initiation factor 3 complex, eIF3e"/>
    <property type="evidence" value="ECO:0007669"/>
    <property type="project" value="EnsemblFungi"/>
</dbReference>
<dbReference type="GO" id="GO:0071541">
    <property type="term" value="C:eukaryotic translation initiation factor 3 complex, eIF3m"/>
    <property type="evidence" value="ECO:0007669"/>
    <property type="project" value="EnsemblFungi"/>
</dbReference>
<dbReference type="GO" id="GO:0043614">
    <property type="term" value="C:multi-eIF complex"/>
    <property type="evidence" value="ECO:0007669"/>
    <property type="project" value="EnsemblFungi"/>
</dbReference>
<dbReference type="GO" id="GO:0003723">
    <property type="term" value="F:RNA binding"/>
    <property type="evidence" value="ECO:0007669"/>
    <property type="project" value="UniProtKB-UniRule"/>
</dbReference>
<dbReference type="GO" id="GO:0003743">
    <property type="term" value="F:translation initiation factor activity"/>
    <property type="evidence" value="ECO:0007669"/>
    <property type="project" value="UniProtKB-UniRule"/>
</dbReference>
<dbReference type="GO" id="GO:0001732">
    <property type="term" value="P:formation of cytoplasmic translation initiation complex"/>
    <property type="evidence" value="ECO:0007669"/>
    <property type="project" value="UniProtKB-UniRule"/>
</dbReference>
<dbReference type="GO" id="GO:0002188">
    <property type="term" value="P:translation reinitiation"/>
    <property type="evidence" value="ECO:0007669"/>
    <property type="project" value="EnsemblFungi"/>
</dbReference>
<dbReference type="GO" id="GO:0006415">
    <property type="term" value="P:translational termination"/>
    <property type="evidence" value="ECO:0007669"/>
    <property type="project" value="EnsemblFungi"/>
</dbReference>
<dbReference type="CDD" id="cd12933">
    <property type="entry name" value="eIF3G"/>
    <property type="match status" value="1"/>
</dbReference>
<dbReference type="CDD" id="cd12408">
    <property type="entry name" value="RRM_eIF3G_like"/>
    <property type="match status" value="1"/>
</dbReference>
<dbReference type="FunFam" id="3.30.70.330:FF:000328">
    <property type="entry name" value="Eukaryotic translation initiation factor 3 subunit G"/>
    <property type="match status" value="1"/>
</dbReference>
<dbReference type="Gene3D" id="3.30.70.330">
    <property type="match status" value="1"/>
</dbReference>
<dbReference type="HAMAP" id="MF_03006">
    <property type="entry name" value="eIF3g"/>
    <property type="match status" value="1"/>
</dbReference>
<dbReference type="InterPro" id="IPR017334">
    <property type="entry name" value="eIF3_g"/>
</dbReference>
<dbReference type="InterPro" id="IPR024675">
    <property type="entry name" value="eIF3g_N"/>
</dbReference>
<dbReference type="InterPro" id="IPR034240">
    <property type="entry name" value="eIF3G_RRM"/>
</dbReference>
<dbReference type="InterPro" id="IPR012677">
    <property type="entry name" value="Nucleotide-bd_a/b_plait_sf"/>
</dbReference>
<dbReference type="InterPro" id="IPR035979">
    <property type="entry name" value="RBD_domain_sf"/>
</dbReference>
<dbReference type="InterPro" id="IPR000504">
    <property type="entry name" value="RRM_dom"/>
</dbReference>
<dbReference type="PANTHER" id="PTHR10352">
    <property type="entry name" value="EUKARYOTIC TRANSLATION INITIATION FACTOR 3 SUBUNIT G"/>
    <property type="match status" value="1"/>
</dbReference>
<dbReference type="Pfam" id="PF12353">
    <property type="entry name" value="eIF3g"/>
    <property type="match status" value="1"/>
</dbReference>
<dbReference type="Pfam" id="PF00076">
    <property type="entry name" value="RRM_1"/>
    <property type="match status" value="1"/>
</dbReference>
<dbReference type="PIRSF" id="PIRSF037949">
    <property type="entry name" value="Transl_init_eIF-3_RNA-bind"/>
    <property type="match status" value="1"/>
</dbReference>
<dbReference type="SMART" id="SM00360">
    <property type="entry name" value="RRM"/>
    <property type="match status" value="1"/>
</dbReference>
<dbReference type="SUPFAM" id="SSF54928">
    <property type="entry name" value="RNA-binding domain, RBD"/>
    <property type="match status" value="1"/>
</dbReference>
<dbReference type="PROSITE" id="PS50102">
    <property type="entry name" value="RRM"/>
    <property type="match status" value="1"/>
</dbReference>
<evidence type="ECO:0000255" key="1">
    <source>
        <dbReference type="HAMAP-Rule" id="MF_03006"/>
    </source>
</evidence>
<evidence type="ECO:0000256" key="2">
    <source>
        <dbReference type="SAM" id="MobiDB-lite"/>
    </source>
</evidence>
<feature type="chain" id="PRO_0000365433" description="Eukaryotic translation initiation factor 3 subunit G">
    <location>
        <begin position="1"/>
        <end position="290"/>
    </location>
</feature>
<feature type="domain" description="RRM" evidence="1">
    <location>
        <begin position="210"/>
        <end position="288"/>
    </location>
</feature>
<feature type="region of interest" description="Disordered" evidence="2">
    <location>
        <begin position="1"/>
        <end position="34"/>
    </location>
</feature>
<sequence length="290" mass="31871">MSRLGNRAADWADDEEFDDPSALPAQQVTTNKDGTKTVVSYRFNDEGKKVKVTRRIKTTVVREHVNPQVAERRSWAKFGLEKGHAAGPSFDTTSVGENIVFRPSVNWRVQAAEAEKAGPEKGSIKDQLKDKKVKCRICSGEHFTARCPFKDTMAPVDETAAAGAEPGADDVPAAGGLGAGTSSYVPPHLRKGAAAGGERMAGKYEKDDLATLRVTNVSELAEESELRDLFERFGRVTRVFLARDRETQRAKGFAFISFADRTDAARACEKMDGFGYRHLILRVEFAKRAT</sequence>